<protein>
    <recommendedName>
        <fullName evidence="1">GTP cyclohydrolase 1</fullName>
        <ecNumber evidence="1">3.5.4.16</ecNumber>
    </recommendedName>
    <alternativeName>
        <fullName evidence="1">GTP cyclohydrolase I</fullName>
        <shortName evidence="1">GTP-CH-I</shortName>
    </alternativeName>
</protein>
<reference key="1">
    <citation type="journal article" date="2009" name="J. Bacteriol.">
        <title>Genome sequences of three Agrobacterium biovars help elucidate the evolution of multichromosome genomes in bacteria.</title>
        <authorList>
            <person name="Slater S.C."/>
            <person name="Goldman B.S."/>
            <person name="Goodner B."/>
            <person name="Setubal J.C."/>
            <person name="Farrand S.K."/>
            <person name="Nester E.W."/>
            <person name="Burr T.J."/>
            <person name="Banta L."/>
            <person name="Dickerman A.W."/>
            <person name="Paulsen I."/>
            <person name="Otten L."/>
            <person name="Suen G."/>
            <person name="Welch R."/>
            <person name="Almeida N.F."/>
            <person name="Arnold F."/>
            <person name="Burton O.T."/>
            <person name="Du Z."/>
            <person name="Ewing A."/>
            <person name="Godsy E."/>
            <person name="Heisel S."/>
            <person name="Houmiel K.L."/>
            <person name="Jhaveri J."/>
            <person name="Lu J."/>
            <person name="Miller N.M."/>
            <person name="Norton S."/>
            <person name="Chen Q."/>
            <person name="Phoolcharoen W."/>
            <person name="Ohlin V."/>
            <person name="Ondrusek D."/>
            <person name="Pride N."/>
            <person name="Stricklin S.L."/>
            <person name="Sun J."/>
            <person name="Wheeler C."/>
            <person name="Wilson L."/>
            <person name="Zhu H."/>
            <person name="Wood D.W."/>
        </authorList>
    </citation>
    <scope>NUCLEOTIDE SEQUENCE [LARGE SCALE GENOMIC DNA]</scope>
    <source>
        <strain>ATCC BAA-846 / DSM 112012 / S4</strain>
    </source>
</reference>
<evidence type="ECO:0000255" key="1">
    <source>
        <dbReference type="HAMAP-Rule" id="MF_00223"/>
    </source>
</evidence>
<evidence type="ECO:0000256" key="2">
    <source>
        <dbReference type="SAM" id="MobiDB-lite"/>
    </source>
</evidence>
<gene>
    <name evidence="1" type="primary">folE</name>
    <name type="ordered locus">Avi_2207</name>
</gene>
<proteinExistence type="inferred from homology"/>
<name>GCH1_ALLAM</name>
<sequence>MDATVKKMSPETSRPSREEAENAVRTLLRWAGDDPSREGLLDTPKRVAKAYGELFGGYNVNVEDVLGTTFEEVGGYNDIVLVRDIPFFSHCEHHMLPVIGKAHVAYLPNGRVLGLSKIARVVDLFARRLQTQETMTAQIADSLVQYLQPRGVAVMVDAEHMCMAMRGIQKSGSTTLTTTFTGEFKTDVPQQVRFMTMVQNR</sequence>
<dbReference type="EC" id="3.5.4.16" evidence="1"/>
<dbReference type="EMBL" id="CP000633">
    <property type="protein sequence ID" value="ACM36579.1"/>
    <property type="molecule type" value="Genomic_DNA"/>
</dbReference>
<dbReference type="RefSeq" id="WP_015916000.1">
    <property type="nucleotide sequence ID" value="NC_011989.1"/>
</dbReference>
<dbReference type="SMR" id="B9JWF1"/>
<dbReference type="STRING" id="311402.Avi_2207"/>
<dbReference type="KEGG" id="avi:Avi_2207"/>
<dbReference type="eggNOG" id="COG0302">
    <property type="taxonomic scope" value="Bacteria"/>
</dbReference>
<dbReference type="HOGENOM" id="CLU_049768_3_1_5"/>
<dbReference type="UniPathway" id="UPA00848">
    <property type="reaction ID" value="UER00151"/>
</dbReference>
<dbReference type="Proteomes" id="UP000001596">
    <property type="component" value="Chromosome 1"/>
</dbReference>
<dbReference type="GO" id="GO:0005737">
    <property type="term" value="C:cytoplasm"/>
    <property type="evidence" value="ECO:0007669"/>
    <property type="project" value="TreeGrafter"/>
</dbReference>
<dbReference type="GO" id="GO:0005525">
    <property type="term" value="F:GTP binding"/>
    <property type="evidence" value="ECO:0007669"/>
    <property type="project" value="UniProtKB-KW"/>
</dbReference>
<dbReference type="GO" id="GO:0003934">
    <property type="term" value="F:GTP cyclohydrolase I activity"/>
    <property type="evidence" value="ECO:0007669"/>
    <property type="project" value="UniProtKB-UniRule"/>
</dbReference>
<dbReference type="GO" id="GO:0008270">
    <property type="term" value="F:zinc ion binding"/>
    <property type="evidence" value="ECO:0007669"/>
    <property type="project" value="UniProtKB-UniRule"/>
</dbReference>
<dbReference type="GO" id="GO:0006730">
    <property type="term" value="P:one-carbon metabolic process"/>
    <property type="evidence" value="ECO:0007669"/>
    <property type="project" value="UniProtKB-UniRule"/>
</dbReference>
<dbReference type="GO" id="GO:0006729">
    <property type="term" value="P:tetrahydrobiopterin biosynthetic process"/>
    <property type="evidence" value="ECO:0007669"/>
    <property type="project" value="TreeGrafter"/>
</dbReference>
<dbReference type="GO" id="GO:0046654">
    <property type="term" value="P:tetrahydrofolate biosynthetic process"/>
    <property type="evidence" value="ECO:0007669"/>
    <property type="project" value="UniProtKB-UniRule"/>
</dbReference>
<dbReference type="FunFam" id="1.10.286.10:FF:000001">
    <property type="entry name" value="GTP cyclohydrolase 1"/>
    <property type="match status" value="1"/>
</dbReference>
<dbReference type="FunFam" id="3.30.1130.10:FF:000001">
    <property type="entry name" value="GTP cyclohydrolase 1"/>
    <property type="match status" value="1"/>
</dbReference>
<dbReference type="Gene3D" id="1.10.286.10">
    <property type="match status" value="1"/>
</dbReference>
<dbReference type="Gene3D" id="3.30.1130.10">
    <property type="match status" value="1"/>
</dbReference>
<dbReference type="HAMAP" id="MF_00223">
    <property type="entry name" value="FolE"/>
    <property type="match status" value="1"/>
</dbReference>
<dbReference type="InterPro" id="IPR043133">
    <property type="entry name" value="GTP-CH-I_C/QueF"/>
</dbReference>
<dbReference type="InterPro" id="IPR043134">
    <property type="entry name" value="GTP-CH-I_N"/>
</dbReference>
<dbReference type="InterPro" id="IPR001474">
    <property type="entry name" value="GTP_CycHdrlase_I"/>
</dbReference>
<dbReference type="InterPro" id="IPR018234">
    <property type="entry name" value="GTP_CycHdrlase_I_CS"/>
</dbReference>
<dbReference type="InterPro" id="IPR020602">
    <property type="entry name" value="GTP_CycHdrlase_I_dom"/>
</dbReference>
<dbReference type="NCBIfam" id="TIGR00063">
    <property type="entry name" value="folE"/>
    <property type="match status" value="1"/>
</dbReference>
<dbReference type="NCBIfam" id="NF006825">
    <property type="entry name" value="PRK09347.1-2"/>
    <property type="match status" value="1"/>
</dbReference>
<dbReference type="NCBIfam" id="NF006826">
    <property type="entry name" value="PRK09347.1-3"/>
    <property type="match status" value="1"/>
</dbReference>
<dbReference type="PANTHER" id="PTHR11109:SF7">
    <property type="entry name" value="GTP CYCLOHYDROLASE 1"/>
    <property type="match status" value="1"/>
</dbReference>
<dbReference type="PANTHER" id="PTHR11109">
    <property type="entry name" value="GTP CYCLOHYDROLASE I"/>
    <property type="match status" value="1"/>
</dbReference>
<dbReference type="Pfam" id="PF01227">
    <property type="entry name" value="GTP_cyclohydroI"/>
    <property type="match status" value="1"/>
</dbReference>
<dbReference type="SUPFAM" id="SSF55620">
    <property type="entry name" value="Tetrahydrobiopterin biosynthesis enzymes-like"/>
    <property type="match status" value="1"/>
</dbReference>
<dbReference type="PROSITE" id="PS00859">
    <property type="entry name" value="GTP_CYCLOHYDROL_1_1"/>
    <property type="match status" value="1"/>
</dbReference>
<accession>B9JWF1</accession>
<comment type="catalytic activity">
    <reaction evidence="1">
        <text>GTP + H2O = 7,8-dihydroneopterin 3'-triphosphate + formate + H(+)</text>
        <dbReference type="Rhea" id="RHEA:17473"/>
        <dbReference type="ChEBI" id="CHEBI:15377"/>
        <dbReference type="ChEBI" id="CHEBI:15378"/>
        <dbReference type="ChEBI" id="CHEBI:15740"/>
        <dbReference type="ChEBI" id="CHEBI:37565"/>
        <dbReference type="ChEBI" id="CHEBI:58462"/>
        <dbReference type="EC" id="3.5.4.16"/>
    </reaction>
</comment>
<comment type="pathway">
    <text evidence="1">Cofactor biosynthesis; 7,8-dihydroneopterin triphosphate biosynthesis; 7,8-dihydroneopterin triphosphate from GTP: step 1/1.</text>
</comment>
<comment type="subunit">
    <text evidence="1">Homomer.</text>
</comment>
<comment type="similarity">
    <text evidence="1">Belongs to the GTP cyclohydrolase I family.</text>
</comment>
<feature type="chain" id="PRO_1000124905" description="GTP cyclohydrolase 1">
    <location>
        <begin position="1"/>
        <end position="201"/>
    </location>
</feature>
<feature type="region of interest" description="Disordered" evidence="2">
    <location>
        <begin position="1"/>
        <end position="20"/>
    </location>
</feature>
<feature type="binding site" evidence="1">
    <location>
        <position position="91"/>
    </location>
    <ligand>
        <name>Zn(2+)</name>
        <dbReference type="ChEBI" id="CHEBI:29105"/>
    </ligand>
</feature>
<feature type="binding site" evidence="1">
    <location>
        <position position="94"/>
    </location>
    <ligand>
        <name>Zn(2+)</name>
        <dbReference type="ChEBI" id="CHEBI:29105"/>
    </ligand>
</feature>
<feature type="binding site" evidence="1">
    <location>
        <position position="162"/>
    </location>
    <ligand>
        <name>Zn(2+)</name>
        <dbReference type="ChEBI" id="CHEBI:29105"/>
    </ligand>
</feature>
<keyword id="KW-0342">GTP-binding</keyword>
<keyword id="KW-0378">Hydrolase</keyword>
<keyword id="KW-0479">Metal-binding</keyword>
<keyword id="KW-0547">Nucleotide-binding</keyword>
<keyword id="KW-0554">One-carbon metabolism</keyword>
<keyword id="KW-1185">Reference proteome</keyword>
<keyword id="KW-0862">Zinc</keyword>
<organism>
    <name type="scientific">Allorhizobium ampelinum (strain ATCC BAA-846 / DSM 112012 / S4)</name>
    <name type="common">Agrobacterium vitis (strain S4)</name>
    <dbReference type="NCBI Taxonomy" id="311402"/>
    <lineage>
        <taxon>Bacteria</taxon>
        <taxon>Pseudomonadati</taxon>
        <taxon>Pseudomonadota</taxon>
        <taxon>Alphaproteobacteria</taxon>
        <taxon>Hyphomicrobiales</taxon>
        <taxon>Rhizobiaceae</taxon>
        <taxon>Rhizobium/Agrobacterium group</taxon>
        <taxon>Allorhizobium</taxon>
        <taxon>Allorhizobium ampelinum</taxon>
    </lineage>
</organism>